<evidence type="ECO:0000250" key="1"/>
<evidence type="ECO:0000305" key="2"/>
<sequence length="506" mass="56856">MISAIEPKNLLRPHSQPVVTTSTLQPDDECNIELRIEDTTVDKYPAKQHARRVAAEIHRDRGLVYLMGQKSTLYEDSDQERTFRQRRYFFYMSGVDEPDCDLTYDINADKLTLYVPDFDLKRTIWMGPTLGREEALQRFDIDEVKYQSSLDEDVKQWAQNQGRGSTLYLLHESQKPAEKVPNVFIDSKTLKQAMDTSRAIKDEHEIGLIRRANEVSAAAHIDVLRGIRKMSNERDIEASFLNTSVSLGAHKQAYHIIAASGSNAATLHYSKNNEPLKGRQFVCLDAGAEWNCYASDVTRTFPMTSQWPSAEAKHIYKLVEHMQESCMVRVKEGVRYLDLHILAHRSLIRGFLTLGIFKGGTLEEIQNSGASNLFFPHGLGHHIGLEVHDVSPESIMAQDNGDYSDNVLISPNNLSPCTTSSPTLKSGMVVTIEPGIYFSQIALDNAKPEQVKYVDLELVKTYMPVGGVRIEDDILVTKTGYENLTTAPKGDGMLEIIRQGDGSCNI</sequence>
<name>AMPP2_BLAGS</name>
<feature type="chain" id="PRO_0000411819" description="Probable Xaa-Pro aminopeptidase BDBG_08406">
    <location>
        <begin position="1"/>
        <end position="506"/>
    </location>
</feature>
<feature type="binding site" evidence="1">
    <location>
        <position position="285"/>
    </location>
    <ligand>
        <name>Mn(2+)</name>
        <dbReference type="ChEBI" id="CHEBI:29035"/>
        <label>2</label>
    </ligand>
</feature>
<feature type="binding site" evidence="1">
    <location>
        <position position="296"/>
    </location>
    <ligand>
        <name>Mn(2+)</name>
        <dbReference type="ChEBI" id="CHEBI:29035"/>
        <label>1</label>
    </ligand>
</feature>
<feature type="binding site" evidence="1">
    <location>
        <position position="296"/>
    </location>
    <ligand>
        <name>Mn(2+)</name>
        <dbReference type="ChEBI" id="CHEBI:29035"/>
        <label>2</label>
    </ligand>
</feature>
<feature type="binding site" evidence="1">
    <location>
        <position position="433"/>
    </location>
    <ligand>
        <name>Mn(2+)</name>
        <dbReference type="ChEBI" id="CHEBI:29035"/>
        <label>1</label>
    </ligand>
</feature>
<feature type="binding site" evidence="1">
    <location>
        <position position="471"/>
    </location>
    <ligand>
        <name>Mn(2+)</name>
        <dbReference type="ChEBI" id="CHEBI:29035"/>
        <label>1</label>
    </ligand>
</feature>
<feature type="binding site" evidence="1">
    <location>
        <position position="471"/>
    </location>
    <ligand>
        <name>Mn(2+)</name>
        <dbReference type="ChEBI" id="CHEBI:29035"/>
        <label>2</label>
    </ligand>
</feature>
<proteinExistence type="inferred from homology"/>
<gene>
    <name type="ORF">BDBG_08406</name>
</gene>
<comment type="function">
    <text evidence="1">Catalyzes the removal of a penultimate prolyl residue from the N-termini of peptides.</text>
</comment>
<comment type="catalytic activity">
    <reaction>
        <text>Release of any N-terminal amino acid, including proline, that is linked to proline, even from a dipeptide or tripeptide.</text>
        <dbReference type="EC" id="3.4.11.9"/>
    </reaction>
</comment>
<comment type="cofactor">
    <cofactor evidence="1">
        <name>Mn(2+)</name>
        <dbReference type="ChEBI" id="CHEBI:29035"/>
    </cofactor>
    <text evidence="1">Binds 2 manganese ions per subunit.</text>
</comment>
<comment type="similarity">
    <text evidence="2">Belongs to the peptidase M24B family.</text>
</comment>
<keyword id="KW-0031">Aminopeptidase</keyword>
<keyword id="KW-0378">Hydrolase</keyword>
<keyword id="KW-0464">Manganese</keyword>
<keyword id="KW-0479">Metal-binding</keyword>
<keyword id="KW-0482">Metalloprotease</keyword>
<keyword id="KW-0645">Protease</keyword>
<keyword id="KW-1185">Reference proteome</keyword>
<reference key="1">
    <citation type="journal article" date="2015" name="PLoS Genet.">
        <title>The dynamic genome and transcriptome of the human fungal pathogen Blastomyces and close relative Emmonsia.</title>
        <authorList>
            <person name="Munoz J.F."/>
            <person name="Gauthier G.M."/>
            <person name="Desjardins C.A."/>
            <person name="Gallo J.E."/>
            <person name="Holder J."/>
            <person name="Sullivan T.D."/>
            <person name="Marty A.J."/>
            <person name="Carmen J.C."/>
            <person name="Chen Z."/>
            <person name="Ding L."/>
            <person name="Gujja S."/>
            <person name="Magrini V."/>
            <person name="Misas E."/>
            <person name="Mitreva M."/>
            <person name="Priest M."/>
            <person name="Saif S."/>
            <person name="Whiston E.A."/>
            <person name="Young S."/>
            <person name="Zeng Q."/>
            <person name="Goldman W.E."/>
            <person name="Mardis E.R."/>
            <person name="Taylor J.W."/>
            <person name="McEwen J.G."/>
            <person name="Clay O.K."/>
            <person name="Klein B.S."/>
            <person name="Cuomo C.A."/>
        </authorList>
    </citation>
    <scope>NUCLEOTIDE SEQUENCE [LARGE SCALE GENOMIC DNA]</scope>
    <source>
        <strain>SLH14081</strain>
    </source>
</reference>
<organism>
    <name type="scientific">Blastomyces gilchristii (strain SLH14081)</name>
    <name type="common">Blastomyces dermatitidis</name>
    <dbReference type="NCBI Taxonomy" id="559298"/>
    <lineage>
        <taxon>Eukaryota</taxon>
        <taxon>Fungi</taxon>
        <taxon>Dikarya</taxon>
        <taxon>Ascomycota</taxon>
        <taxon>Pezizomycotina</taxon>
        <taxon>Eurotiomycetes</taxon>
        <taxon>Eurotiomycetidae</taxon>
        <taxon>Onygenales</taxon>
        <taxon>Ajellomycetaceae</taxon>
        <taxon>Blastomyces</taxon>
    </lineage>
</organism>
<protein>
    <recommendedName>
        <fullName>Probable Xaa-Pro aminopeptidase BDBG_08406</fullName>
        <ecNumber>3.4.11.9</ecNumber>
    </recommendedName>
    <alternativeName>
        <fullName>Aminoacylproline aminopeptidase</fullName>
    </alternativeName>
    <alternativeName>
        <fullName>Prolidase</fullName>
    </alternativeName>
</protein>
<accession>C5K0R2</accession>
<accession>A0A179V168</accession>
<dbReference type="EC" id="3.4.11.9"/>
<dbReference type="EMBL" id="GG657470">
    <property type="protein sequence ID" value="OAT13147.1"/>
    <property type="molecule type" value="Genomic_DNA"/>
</dbReference>
<dbReference type="RefSeq" id="XP_002621375.1">
    <property type="nucleotide sequence ID" value="XM_002621329.2"/>
</dbReference>
<dbReference type="SMR" id="C5K0R2"/>
<dbReference type="STRING" id="559298.C5K0R2"/>
<dbReference type="GeneID" id="8501687"/>
<dbReference type="KEGG" id="bgh:BDBG_08406"/>
<dbReference type="VEuPathDB" id="FungiDB:BDBG_08406"/>
<dbReference type="HOGENOM" id="CLU_017266_1_2_1"/>
<dbReference type="OrthoDB" id="10261878at2759"/>
<dbReference type="Proteomes" id="UP000002038">
    <property type="component" value="Unassembled WGS sequence"/>
</dbReference>
<dbReference type="GO" id="GO:0030145">
    <property type="term" value="F:manganese ion binding"/>
    <property type="evidence" value="ECO:0007669"/>
    <property type="project" value="InterPro"/>
</dbReference>
<dbReference type="GO" id="GO:0070006">
    <property type="term" value="F:metalloaminopeptidase activity"/>
    <property type="evidence" value="ECO:0007669"/>
    <property type="project" value="InterPro"/>
</dbReference>
<dbReference type="GO" id="GO:0006508">
    <property type="term" value="P:proteolysis"/>
    <property type="evidence" value="ECO:0007669"/>
    <property type="project" value="UniProtKB-KW"/>
</dbReference>
<dbReference type="CDD" id="cd01087">
    <property type="entry name" value="Prolidase"/>
    <property type="match status" value="1"/>
</dbReference>
<dbReference type="Gene3D" id="3.90.230.10">
    <property type="entry name" value="Creatinase/methionine aminopeptidase superfamily"/>
    <property type="match status" value="1"/>
</dbReference>
<dbReference type="Gene3D" id="3.40.350.10">
    <property type="entry name" value="Creatinase/prolidase N-terminal domain"/>
    <property type="match status" value="1"/>
</dbReference>
<dbReference type="InterPro" id="IPR007865">
    <property type="entry name" value="Aminopep_P_N"/>
</dbReference>
<dbReference type="InterPro" id="IPR029149">
    <property type="entry name" value="Creatin/AminoP/Spt16_N"/>
</dbReference>
<dbReference type="InterPro" id="IPR036005">
    <property type="entry name" value="Creatinase/aminopeptidase-like"/>
</dbReference>
<dbReference type="InterPro" id="IPR000994">
    <property type="entry name" value="Pept_M24"/>
</dbReference>
<dbReference type="InterPro" id="IPR001131">
    <property type="entry name" value="Peptidase_M24B_aminopep-P_CS"/>
</dbReference>
<dbReference type="InterPro" id="IPR052433">
    <property type="entry name" value="X-Pro_dipept-like"/>
</dbReference>
<dbReference type="PANTHER" id="PTHR43226">
    <property type="entry name" value="XAA-PRO AMINOPEPTIDASE 3"/>
    <property type="match status" value="1"/>
</dbReference>
<dbReference type="PANTHER" id="PTHR43226:SF3">
    <property type="entry name" value="XAA-PRO AMINOPEPTIDASE AN0832-RELATED"/>
    <property type="match status" value="1"/>
</dbReference>
<dbReference type="Pfam" id="PF05195">
    <property type="entry name" value="AMP_N"/>
    <property type="match status" value="1"/>
</dbReference>
<dbReference type="Pfam" id="PF00557">
    <property type="entry name" value="Peptidase_M24"/>
    <property type="match status" value="1"/>
</dbReference>
<dbReference type="SMART" id="SM01011">
    <property type="entry name" value="AMP_N"/>
    <property type="match status" value="1"/>
</dbReference>
<dbReference type="SUPFAM" id="SSF55920">
    <property type="entry name" value="Creatinase/aminopeptidase"/>
    <property type="match status" value="1"/>
</dbReference>
<dbReference type="SUPFAM" id="SSF53092">
    <property type="entry name" value="Creatinase/prolidase N-terminal domain"/>
    <property type="match status" value="1"/>
</dbReference>
<dbReference type="PROSITE" id="PS00491">
    <property type="entry name" value="PROLINE_PEPTIDASE"/>
    <property type="match status" value="1"/>
</dbReference>